<accession>Q2NBU9</accession>
<comment type="function">
    <text evidence="1">Catalyzes the formation of phosphatidylethanolamine (PtdEtn) from phosphatidylserine (PtdSer).</text>
</comment>
<comment type="catalytic activity">
    <reaction evidence="1">
        <text>a 1,2-diacyl-sn-glycero-3-phospho-L-serine + H(+) = a 1,2-diacyl-sn-glycero-3-phosphoethanolamine + CO2</text>
        <dbReference type="Rhea" id="RHEA:20828"/>
        <dbReference type="ChEBI" id="CHEBI:15378"/>
        <dbReference type="ChEBI" id="CHEBI:16526"/>
        <dbReference type="ChEBI" id="CHEBI:57262"/>
        <dbReference type="ChEBI" id="CHEBI:64612"/>
        <dbReference type="EC" id="4.1.1.65"/>
    </reaction>
</comment>
<comment type="cofactor">
    <cofactor evidence="1">
        <name>pyruvate</name>
        <dbReference type="ChEBI" id="CHEBI:15361"/>
    </cofactor>
    <text evidence="1">Binds 1 pyruvoyl group covalently per subunit.</text>
</comment>
<comment type="pathway">
    <text evidence="1">Phospholipid metabolism; phosphatidylethanolamine biosynthesis; phosphatidylethanolamine from CDP-diacylglycerol: step 2/2.</text>
</comment>
<comment type="subunit">
    <text evidence="1">Heterodimer of a large membrane-associated beta subunit and a small pyruvoyl-containing alpha subunit.</text>
</comment>
<comment type="subcellular location">
    <subcellularLocation>
        <location evidence="1">Cell membrane</location>
        <topology evidence="1">Peripheral membrane protein</topology>
    </subcellularLocation>
</comment>
<comment type="PTM">
    <text evidence="1">Is synthesized initially as an inactive proenzyme. Formation of the active enzyme involves a self-maturation process in which the active site pyruvoyl group is generated from an internal serine residue via an autocatalytic post-translational modification. Two non-identical subunits are generated from the proenzyme in this reaction, and the pyruvate is formed at the N-terminus of the alpha chain, which is derived from the carboxyl end of the proenzyme. The post-translation cleavage follows an unusual pathway, termed non-hydrolytic serinolysis, in which the side chain hydroxyl group of the serine supplies its oxygen atom to form the C-terminus of the beta chain, while the remainder of the serine residue undergoes an oxidative deamination to produce ammonia and the pyruvoyl prosthetic group on the alpha chain.</text>
</comment>
<comment type="similarity">
    <text evidence="1">Belongs to the phosphatidylserine decarboxylase family. PSD-A subfamily.</text>
</comment>
<gene>
    <name evidence="1" type="primary">psd</name>
    <name type="ordered locus">ELI_03750</name>
</gene>
<feature type="chain" id="PRO_1000061928" description="Phosphatidylserine decarboxylase beta chain" evidence="1">
    <location>
        <begin position="1"/>
        <end position="207"/>
    </location>
</feature>
<feature type="chain" id="PRO_1000061929" description="Phosphatidylserine decarboxylase alpha chain" evidence="1">
    <location>
        <begin position="208"/>
        <end position="249"/>
    </location>
</feature>
<feature type="active site" description="Schiff-base intermediate with substrate; via pyruvic acid" evidence="1">
    <location>
        <position position="208"/>
    </location>
</feature>
<feature type="site" description="Cleavage (non-hydrolytic); by autocatalysis" evidence="1">
    <location>
        <begin position="207"/>
        <end position="208"/>
    </location>
</feature>
<feature type="modified residue" description="Pyruvic acid (Ser); by autocatalysis" evidence="1">
    <location>
        <position position="208"/>
    </location>
</feature>
<proteinExistence type="inferred from homology"/>
<reference key="1">
    <citation type="journal article" date="2009" name="J. Bacteriol.">
        <title>Complete genome sequence of Erythrobacter litoralis HTCC2594.</title>
        <authorList>
            <person name="Oh H.M."/>
            <person name="Giovannoni S.J."/>
            <person name="Ferriera S."/>
            <person name="Johnson J."/>
            <person name="Cho J.C."/>
        </authorList>
    </citation>
    <scope>NUCLEOTIDE SEQUENCE [LARGE SCALE GENOMIC DNA]</scope>
    <source>
        <strain>HTCC2594</strain>
    </source>
</reference>
<protein>
    <recommendedName>
        <fullName evidence="1">Phosphatidylserine decarboxylase proenzyme</fullName>
        <ecNumber evidence="1">4.1.1.65</ecNumber>
    </recommendedName>
    <component>
        <recommendedName>
            <fullName evidence="1">Phosphatidylserine decarboxylase alpha chain</fullName>
        </recommendedName>
    </component>
    <component>
        <recommendedName>
            <fullName evidence="1">Phosphatidylserine decarboxylase beta chain</fullName>
        </recommendedName>
    </component>
</protein>
<keyword id="KW-1003">Cell membrane</keyword>
<keyword id="KW-0210">Decarboxylase</keyword>
<keyword id="KW-0444">Lipid biosynthesis</keyword>
<keyword id="KW-0443">Lipid metabolism</keyword>
<keyword id="KW-0456">Lyase</keyword>
<keyword id="KW-0472">Membrane</keyword>
<keyword id="KW-0594">Phospholipid biosynthesis</keyword>
<keyword id="KW-1208">Phospholipid metabolism</keyword>
<keyword id="KW-0670">Pyruvate</keyword>
<keyword id="KW-1185">Reference proteome</keyword>
<keyword id="KW-0865">Zymogen</keyword>
<evidence type="ECO:0000255" key="1">
    <source>
        <dbReference type="HAMAP-Rule" id="MF_00664"/>
    </source>
</evidence>
<name>PSD_ERYLH</name>
<sequence length="249" mass="26657">MANDLLDNKGRGEAGWSWPAIHPEGRKYGLVVAAASLVTAFLAWETIAWPLAFLALGVLAFFRDPERIVPHDEKAIVSPADGMVSLISEVEPPPELAMADAAGNPGLGDAPLTRISIFMSVFDVHINRTPIAGQVSRLIYVPGKFLNADLDKASEENERQHLLVSRPDGLQIGFTQIAGLVARRIVPFVKQGDIVAVGQRIGLIRFGSRVDVYLPAGTAPAVIKGQKVVAGETVLARVGENRLLEGSAQ</sequence>
<dbReference type="EC" id="4.1.1.65" evidence="1"/>
<dbReference type="EMBL" id="CP000157">
    <property type="protein sequence ID" value="ABC62842.1"/>
    <property type="molecule type" value="Genomic_DNA"/>
</dbReference>
<dbReference type="RefSeq" id="WP_011413718.1">
    <property type="nucleotide sequence ID" value="NC_007722.1"/>
</dbReference>
<dbReference type="STRING" id="314225.ELI_03750"/>
<dbReference type="KEGG" id="eli:ELI_03750"/>
<dbReference type="eggNOG" id="COG0688">
    <property type="taxonomic scope" value="Bacteria"/>
</dbReference>
<dbReference type="HOGENOM" id="CLU_072492_0_0_5"/>
<dbReference type="OrthoDB" id="9790893at2"/>
<dbReference type="UniPathway" id="UPA00558">
    <property type="reaction ID" value="UER00616"/>
</dbReference>
<dbReference type="Proteomes" id="UP000008808">
    <property type="component" value="Chromosome"/>
</dbReference>
<dbReference type="GO" id="GO:0005886">
    <property type="term" value="C:plasma membrane"/>
    <property type="evidence" value="ECO:0007669"/>
    <property type="project" value="UniProtKB-SubCell"/>
</dbReference>
<dbReference type="GO" id="GO:0004609">
    <property type="term" value="F:phosphatidylserine decarboxylase activity"/>
    <property type="evidence" value="ECO:0007669"/>
    <property type="project" value="UniProtKB-UniRule"/>
</dbReference>
<dbReference type="GO" id="GO:0006646">
    <property type="term" value="P:phosphatidylethanolamine biosynthetic process"/>
    <property type="evidence" value="ECO:0007669"/>
    <property type="project" value="UniProtKB-UniRule"/>
</dbReference>
<dbReference type="HAMAP" id="MF_00664">
    <property type="entry name" value="PS_decarb_PSD_A"/>
    <property type="match status" value="1"/>
</dbReference>
<dbReference type="InterPro" id="IPR003817">
    <property type="entry name" value="PS_Dcarbxylase"/>
</dbReference>
<dbReference type="InterPro" id="IPR033175">
    <property type="entry name" value="PSD-A"/>
</dbReference>
<dbReference type="NCBIfam" id="NF003678">
    <property type="entry name" value="PRK05305.1-2"/>
    <property type="match status" value="1"/>
</dbReference>
<dbReference type="NCBIfam" id="NF003679">
    <property type="entry name" value="PRK05305.1-3"/>
    <property type="match status" value="1"/>
</dbReference>
<dbReference type="NCBIfam" id="NF003685">
    <property type="entry name" value="PRK05305.2-5"/>
    <property type="match status" value="1"/>
</dbReference>
<dbReference type="PANTHER" id="PTHR35809">
    <property type="entry name" value="ARCHAETIDYLSERINE DECARBOXYLASE PROENZYME-RELATED"/>
    <property type="match status" value="1"/>
</dbReference>
<dbReference type="PANTHER" id="PTHR35809:SF1">
    <property type="entry name" value="ARCHAETIDYLSERINE DECARBOXYLASE PROENZYME-RELATED"/>
    <property type="match status" value="1"/>
</dbReference>
<dbReference type="Pfam" id="PF02666">
    <property type="entry name" value="PS_Dcarbxylase"/>
    <property type="match status" value="1"/>
</dbReference>
<organism>
    <name type="scientific">Erythrobacter litoralis (strain HTCC2594)</name>
    <dbReference type="NCBI Taxonomy" id="314225"/>
    <lineage>
        <taxon>Bacteria</taxon>
        <taxon>Pseudomonadati</taxon>
        <taxon>Pseudomonadota</taxon>
        <taxon>Alphaproteobacteria</taxon>
        <taxon>Sphingomonadales</taxon>
        <taxon>Erythrobacteraceae</taxon>
        <taxon>Erythrobacter/Porphyrobacter group</taxon>
        <taxon>Erythrobacter</taxon>
    </lineage>
</organism>